<proteinExistence type="inferred from homology"/>
<comment type="function">
    <text evidence="1">Catalyzes the conversion of heme O to heme A by two successive hydroxylations of the methyl group at C8. The first hydroxylation forms heme I, the second hydroxylation results in an unstable dihydroxymethyl group, which spontaneously dehydrates, resulting in the formyl group of heme A.</text>
</comment>
<comment type="catalytic activity">
    <reaction evidence="1">
        <text>Fe(II)-heme o + 2 A + H2O = Fe(II)-heme a + 2 AH2</text>
        <dbReference type="Rhea" id="RHEA:63388"/>
        <dbReference type="ChEBI" id="CHEBI:13193"/>
        <dbReference type="ChEBI" id="CHEBI:15377"/>
        <dbReference type="ChEBI" id="CHEBI:17499"/>
        <dbReference type="ChEBI" id="CHEBI:60530"/>
        <dbReference type="ChEBI" id="CHEBI:61715"/>
        <dbReference type="EC" id="1.17.99.9"/>
    </reaction>
    <physiologicalReaction direction="left-to-right" evidence="1">
        <dbReference type="Rhea" id="RHEA:63389"/>
    </physiologicalReaction>
</comment>
<comment type="cofactor">
    <cofactor evidence="1">
        <name>heme b</name>
        <dbReference type="ChEBI" id="CHEBI:60344"/>
    </cofactor>
</comment>
<comment type="pathway">
    <text evidence="1">Porphyrin-containing compound metabolism; heme A biosynthesis; heme A from heme O: step 1/1.</text>
</comment>
<comment type="subunit">
    <text evidence="1">Interacts with CtaB.</text>
</comment>
<comment type="subcellular location">
    <subcellularLocation>
        <location evidence="1">Cell membrane</location>
        <topology evidence="1">Multi-pass membrane protein</topology>
    </subcellularLocation>
</comment>
<comment type="domain">
    <text evidence="1">The N-half (TM1-TM4) and C-half (TM5-TM8) domains are connected by an intracellular loop. Each domain is formed from four-helix bundles and they align in a pseudo twofold symmetry manner. The N-half domain is the substrate-heme O binding domain and the C-half domain is the cofactor heme B binding domain.</text>
</comment>
<comment type="domain">
    <text evidence="1">The cysteines of disulfide bond Cys-37 and Cys-44 may be involved in transfer of reducing equivalents from quinol in the membrane to the active site of the enzyme.</text>
</comment>
<comment type="similarity">
    <text evidence="1">Belongs to the COX15/CtaA family. Type 1 subfamily.</text>
</comment>
<comment type="sequence caution" evidence="2">
    <conflict type="erroneous initiation">
        <sequence resource="EMBL-CDS" id="ABX29073"/>
    </conflict>
</comment>
<organism>
    <name type="scientific">Staphylococcus aureus (strain USA300 / TCH1516)</name>
    <dbReference type="NCBI Taxonomy" id="451516"/>
    <lineage>
        <taxon>Bacteria</taxon>
        <taxon>Bacillati</taxon>
        <taxon>Bacillota</taxon>
        <taxon>Bacilli</taxon>
        <taxon>Bacillales</taxon>
        <taxon>Staphylococcaceae</taxon>
        <taxon>Staphylococcus</taxon>
    </lineage>
</organism>
<feature type="chain" id="PRO_0000348999" description="Heme A synthase">
    <location>
        <begin position="1"/>
        <end position="303"/>
    </location>
</feature>
<feature type="topological domain" description="Cytoplasmic" evidence="1">
    <location>
        <begin position="1"/>
        <end position="8"/>
    </location>
</feature>
<feature type="transmembrane region" description="Helical" evidence="1">
    <location>
        <begin position="9"/>
        <end position="29"/>
    </location>
</feature>
<feature type="topological domain" description="Extracellular" evidence="1">
    <location>
        <begin position="30"/>
        <end position="67"/>
    </location>
</feature>
<feature type="transmembrane region" description="Helical" evidence="1">
    <location>
        <begin position="68"/>
        <end position="88"/>
    </location>
</feature>
<feature type="topological domain" description="Cytoplasmic" evidence="1">
    <location>
        <begin position="89"/>
        <end position="93"/>
    </location>
</feature>
<feature type="transmembrane region" description="Helical" evidence="1">
    <location>
        <begin position="94"/>
        <end position="114"/>
    </location>
</feature>
<feature type="topological domain" description="Extracellular" evidence="1">
    <location>
        <begin position="115"/>
        <end position="125"/>
    </location>
</feature>
<feature type="transmembrane region" description="Helical" evidence="1">
    <location>
        <begin position="126"/>
        <end position="146"/>
    </location>
</feature>
<feature type="topological domain" description="Cytoplasmic" evidence="1">
    <location>
        <begin position="147"/>
        <end position="163"/>
    </location>
</feature>
<feature type="transmembrane region" description="Helical" evidence="1">
    <location>
        <begin position="164"/>
        <end position="184"/>
    </location>
</feature>
<feature type="topological domain" description="Extracellular" evidence="1">
    <location>
        <begin position="185"/>
        <end position="215"/>
    </location>
</feature>
<feature type="transmembrane region" description="Helical" evidence="1">
    <location>
        <begin position="216"/>
        <end position="236"/>
    </location>
</feature>
<feature type="topological domain" description="Cytoplasmic" evidence="1">
    <location>
        <begin position="237"/>
        <end position="244"/>
    </location>
</feature>
<feature type="transmembrane region" description="Helical" evidence="1">
    <location>
        <begin position="245"/>
        <end position="265"/>
    </location>
</feature>
<feature type="topological domain" description="Extracellular" evidence="1">
    <location>
        <begin position="266"/>
        <end position="270"/>
    </location>
</feature>
<feature type="transmembrane region" description="Helical" evidence="1">
    <location>
        <begin position="271"/>
        <end position="291"/>
    </location>
</feature>
<feature type="topological domain" description="Cytoplasmic" evidence="1">
    <location>
        <begin position="292"/>
        <end position="303"/>
    </location>
</feature>
<feature type="active site" evidence="1">
    <location>
        <position position="60"/>
    </location>
</feature>
<feature type="binding site" description="axial binding residue" evidence="1">
    <location>
        <position position="63"/>
    </location>
    <ligand>
        <name>heme o</name>
        <dbReference type="ChEBI" id="CHEBI:24480"/>
    </ligand>
    <ligandPart>
        <name>Fe</name>
        <dbReference type="ChEBI" id="CHEBI:18248"/>
    </ligandPart>
</feature>
<feature type="binding site" description="axial binding residue" evidence="1">
    <location>
        <position position="125"/>
    </location>
    <ligand>
        <name>heme o</name>
        <dbReference type="ChEBI" id="CHEBI:24480"/>
    </ligand>
    <ligandPart>
        <name>Fe</name>
        <dbReference type="ChEBI" id="CHEBI:18248"/>
    </ligandPart>
</feature>
<feature type="binding site" description="axial binding residue" evidence="1">
    <location>
        <position position="214"/>
    </location>
    <ligand>
        <name>heme b</name>
        <dbReference type="ChEBI" id="CHEBI:60344"/>
    </ligand>
    <ligandPart>
        <name>Fe</name>
        <dbReference type="ChEBI" id="CHEBI:18248"/>
    </ligandPart>
</feature>
<feature type="binding site" description="axial binding residue" evidence="1">
    <location>
        <position position="276"/>
    </location>
    <ligand>
        <name>heme b</name>
        <dbReference type="ChEBI" id="CHEBI:60344"/>
    </ligand>
    <ligandPart>
        <name>Fe</name>
        <dbReference type="ChEBI" id="CHEBI:18248"/>
    </ligandPart>
</feature>
<feature type="disulfide bond" description="Essential for catalytic activity" evidence="1">
    <location>
        <begin position="37"/>
        <end position="44"/>
    </location>
</feature>
<keyword id="KW-1003">Cell membrane</keyword>
<keyword id="KW-1015">Disulfide bond</keyword>
<keyword id="KW-0350">Heme biosynthesis</keyword>
<keyword id="KW-0408">Iron</keyword>
<keyword id="KW-0472">Membrane</keyword>
<keyword id="KW-0479">Metal-binding</keyword>
<keyword id="KW-0560">Oxidoreductase</keyword>
<keyword id="KW-0812">Transmembrane</keyword>
<keyword id="KW-1133">Transmembrane helix</keyword>
<accession>A8Z1Q0</accession>
<name>CTAA_STAAT</name>
<evidence type="ECO:0000255" key="1">
    <source>
        <dbReference type="HAMAP-Rule" id="MF_01664"/>
    </source>
</evidence>
<evidence type="ECO:0000305" key="2"/>
<protein>
    <recommendedName>
        <fullName evidence="1">Heme A synthase</fullName>
        <shortName evidence="1">HAS</shortName>
        <ecNumber evidence="1">1.17.99.9</ecNumber>
    </recommendedName>
    <alternativeName>
        <fullName evidence="1">Cytochrome aa3-controlling protein</fullName>
    </alternativeName>
</protein>
<sequence>MFGKKNLKWLGVVATLMMTFVQLGGALVTKTGSADGCGSSWPLCHGALIPEFFPIDTIIELSHRAVSALSLLMVLWLVITAWKHIGYIKEIKPLSIISVGFLLLQALIGAAAVIWQQNDYVLALHFGISLISFSSVFLITLIIFSIDQKYEADELYIKKPLRRLTWLMAIIIYCGVYTGALVRHADASLAYGGWPLPFHDLVPHSEQDWVQLTHRIMAFIVFTIIMITYIHAVKNYPNNRTVHYGYTAAFILVILQVITGALSIMTNVNLIIALFHALFITYLFGMTTYFIMLMLRSVRSDKQ</sequence>
<reference key="1">
    <citation type="journal article" date="2007" name="BMC Microbiol.">
        <title>Subtle genetic changes enhance virulence of methicillin resistant and sensitive Staphylococcus aureus.</title>
        <authorList>
            <person name="Highlander S.K."/>
            <person name="Hulten K.G."/>
            <person name="Qin X."/>
            <person name="Jiang H."/>
            <person name="Yerrapragada S."/>
            <person name="Mason E.O. Jr."/>
            <person name="Shang Y."/>
            <person name="Williams T.M."/>
            <person name="Fortunov R.M."/>
            <person name="Liu Y."/>
            <person name="Igboeli O."/>
            <person name="Petrosino J."/>
            <person name="Tirumalai M."/>
            <person name="Uzman A."/>
            <person name="Fox G.E."/>
            <person name="Cardenas A.M."/>
            <person name="Muzny D.M."/>
            <person name="Hemphill L."/>
            <person name="Ding Y."/>
            <person name="Dugan S."/>
            <person name="Blyth P.R."/>
            <person name="Buhay C.J."/>
            <person name="Dinh H.H."/>
            <person name="Hawes A.C."/>
            <person name="Holder M."/>
            <person name="Kovar C.L."/>
            <person name="Lee S.L."/>
            <person name="Liu W."/>
            <person name="Nazareth L.V."/>
            <person name="Wang Q."/>
            <person name="Zhou J."/>
            <person name="Kaplan S.L."/>
            <person name="Weinstock G.M."/>
        </authorList>
    </citation>
    <scope>NUCLEOTIDE SEQUENCE [LARGE SCALE GENOMIC DNA]</scope>
    <source>
        <strain>USA300 / TCH1516</strain>
    </source>
</reference>
<dbReference type="EC" id="1.17.99.9" evidence="1"/>
<dbReference type="EMBL" id="CP000730">
    <property type="protein sequence ID" value="ABX29073.1"/>
    <property type="status" value="ALT_INIT"/>
    <property type="molecule type" value="Genomic_DNA"/>
</dbReference>
<dbReference type="RefSeq" id="WP_000467123.1">
    <property type="nucleotide sequence ID" value="NC_010079.1"/>
</dbReference>
<dbReference type="SMR" id="A8Z1Q0"/>
<dbReference type="KEGG" id="sax:USA300HOU_1053"/>
<dbReference type="HOGENOM" id="CLU_041525_3_1_9"/>
<dbReference type="UniPathway" id="UPA00269">
    <property type="reaction ID" value="UER00713"/>
</dbReference>
<dbReference type="GO" id="GO:0005886">
    <property type="term" value="C:plasma membrane"/>
    <property type="evidence" value="ECO:0007669"/>
    <property type="project" value="UniProtKB-SubCell"/>
</dbReference>
<dbReference type="GO" id="GO:0046872">
    <property type="term" value="F:metal ion binding"/>
    <property type="evidence" value="ECO:0007669"/>
    <property type="project" value="UniProtKB-KW"/>
</dbReference>
<dbReference type="GO" id="GO:0016653">
    <property type="term" value="F:oxidoreductase activity, acting on NAD(P)H, heme protein as acceptor"/>
    <property type="evidence" value="ECO:0007669"/>
    <property type="project" value="InterPro"/>
</dbReference>
<dbReference type="GO" id="GO:0006784">
    <property type="term" value="P:heme A biosynthetic process"/>
    <property type="evidence" value="ECO:0007669"/>
    <property type="project" value="UniProtKB-UniRule"/>
</dbReference>
<dbReference type="HAMAP" id="MF_01664">
    <property type="entry name" value="HemeA_synth_type1"/>
    <property type="match status" value="1"/>
</dbReference>
<dbReference type="InterPro" id="IPR003780">
    <property type="entry name" value="COX15/CtaA_fam"/>
</dbReference>
<dbReference type="InterPro" id="IPR050450">
    <property type="entry name" value="COX15/CtaA_HemeA_synthase"/>
</dbReference>
<dbReference type="InterPro" id="IPR023755">
    <property type="entry name" value="HemeA_Synthase_type1"/>
</dbReference>
<dbReference type="PANTHER" id="PTHR35457">
    <property type="entry name" value="HEME A SYNTHASE"/>
    <property type="match status" value="1"/>
</dbReference>
<dbReference type="PANTHER" id="PTHR35457:SF1">
    <property type="entry name" value="HEME A SYNTHASE"/>
    <property type="match status" value="1"/>
</dbReference>
<dbReference type="Pfam" id="PF02628">
    <property type="entry name" value="COX15-CtaA"/>
    <property type="match status" value="1"/>
</dbReference>
<gene>
    <name evidence="1" type="primary">ctaA</name>
    <name type="ordered locus">USA300HOU_1053</name>
</gene>